<sequence>MEIVYVEIVDVRAREVLDSRGNPTVEAEVVLEDGTVGRAIVPSGASTGKFEALEIRDKDKKRYHGKGVLKAVENVNETIAPALIGMNAFDQPLVDKTLIELDGTENKSKLGANAILAVSMAVARAAANYLGLPMYKYLGGVNAKVLPVPLMNVINGGQHADNNLDLQEFMIVPAGFDSFKEALRAGAEIFHTLKKILHDSGHVTAVGDEGGFAPNLSSNEEAIKILIEAIEEAGYKPSEQVFIALDCAASSFYDEEKGVYFVDGEEKSSEVLMGYYEELIAKYPIISIEDPFAEEDWDAFVEFTKRVGNKVQIVGDDLYVTNVKRLSKGIELKATNSILIKLNQIGTVTETLDAVELAQKNNMTAIISHRSGESEDTFIADLAVATNAGFIKTGSLSRSERIAKYNQLLRIEEELGKVAEFRGLSSFYSIKR</sequence>
<gene>
    <name evidence="1" type="primary">eno</name>
    <name type="ordered locus">CTN_1698</name>
</gene>
<evidence type="ECO:0000255" key="1">
    <source>
        <dbReference type="HAMAP-Rule" id="MF_00318"/>
    </source>
</evidence>
<comment type="function">
    <text evidence="1">Catalyzes the reversible conversion of 2-phosphoglycerate (2-PG) into phosphoenolpyruvate (PEP). It is essential for the degradation of carbohydrates via glycolysis.</text>
</comment>
<comment type="catalytic activity">
    <reaction evidence="1">
        <text>(2R)-2-phosphoglycerate = phosphoenolpyruvate + H2O</text>
        <dbReference type="Rhea" id="RHEA:10164"/>
        <dbReference type="ChEBI" id="CHEBI:15377"/>
        <dbReference type="ChEBI" id="CHEBI:58289"/>
        <dbReference type="ChEBI" id="CHEBI:58702"/>
        <dbReference type="EC" id="4.2.1.11"/>
    </reaction>
</comment>
<comment type="cofactor">
    <cofactor evidence="1">
        <name>Mg(2+)</name>
        <dbReference type="ChEBI" id="CHEBI:18420"/>
    </cofactor>
    <text evidence="1">Binds a second Mg(2+) ion via substrate during catalysis.</text>
</comment>
<comment type="pathway">
    <text evidence="1">Carbohydrate degradation; glycolysis; pyruvate from D-glyceraldehyde 3-phosphate: step 4/5.</text>
</comment>
<comment type="subcellular location">
    <subcellularLocation>
        <location evidence="1">Cytoplasm</location>
    </subcellularLocation>
    <subcellularLocation>
        <location evidence="1">Secreted</location>
    </subcellularLocation>
    <subcellularLocation>
        <location evidence="1">Cell surface</location>
    </subcellularLocation>
    <text evidence="1">Fractions of enolase are present in both the cytoplasm and on the cell surface.</text>
</comment>
<comment type="similarity">
    <text evidence="1">Belongs to the enolase family.</text>
</comment>
<accession>B9KA91</accession>
<feature type="chain" id="PRO_1000133028" description="Enolase">
    <location>
        <begin position="1"/>
        <end position="432"/>
    </location>
</feature>
<feature type="active site" description="Proton donor" evidence="1">
    <location>
        <position position="209"/>
    </location>
</feature>
<feature type="active site" description="Proton acceptor" evidence="1">
    <location>
        <position position="341"/>
    </location>
</feature>
<feature type="binding site" evidence="1">
    <location>
        <position position="167"/>
    </location>
    <ligand>
        <name>(2R)-2-phosphoglycerate</name>
        <dbReference type="ChEBI" id="CHEBI:58289"/>
    </ligand>
</feature>
<feature type="binding site" evidence="1">
    <location>
        <position position="246"/>
    </location>
    <ligand>
        <name>Mg(2+)</name>
        <dbReference type="ChEBI" id="CHEBI:18420"/>
    </ligand>
</feature>
<feature type="binding site" evidence="1">
    <location>
        <position position="289"/>
    </location>
    <ligand>
        <name>Mg(2+)</name>
        <dbReference type="ChEBI" id="CHEBI:18420"/>
    </ligand>
</feature>
<feature type="binding site" evidence="1">
    <location>
        <position position="316"/>
    </location>
    <ligand>
        <name>Mg(2+)</name>
        <dbReference type="ChEBI" id="CHEBI:18420"/>
    </ligand>
</feature>
<feature type="binding site" evidence="1">
    <location>
        <position position="341"/>
    </location>
    <ligand>
        <name>(2R)-2-phosphoglycerate</name>
        <dbReference type="ChEBI" id="CHEBI:58289"/>
    </ligand>
</feature>
<feature type="binding site" evidence="1">
    <location>
        <position position="370"/>
    </location>
    <ligand>
        <name>(2R)-2-phosphoglycerate</name>
        <dbReference type="ChEBI" id="CHEBI:58289"/>
    </ligand>
</feature>
<feature type="binding site" evidence="1">
    <location>
        <position position="371"/>
    </location>
    <ligand>
        <name>(2R)-2-phosphoglycerate</name>
        <dbReference type="ChEBI" id="CHEBI:58289"/>
    </ligand>
</feature>
<feature type="binding site" evidence="1">
    <location>
        <position position="392"/>
    </location>
    <ligand>
        <name>(2R)-2-phosphoglycerate</name>
        <dbReference type="ChEBI" id="CHEBI:58289"/>
    </ligand>
</feature>
<dbReference type="EC" id="4.2.1.11" evidence="1"/>
<dbReference type="EMBL" id="CP000916">
    <property type="protein sequence ID" value="ACM23874.1"/>
    <property type="molecule type" value="Genomic_DNA"/>
</dbReference>
<dbReference type="SMR" id="B9KA91"/>
<dbReference type="STRING" id="309803.CTN_1698"/>
<dbReference type="KEGG" id="tna:CTN_1698"/>
<dbReference type="eggNOG" id="COG0148">
    <property type="taxonomic scope" value="Bacteria"/>
</dbReference>
<dbReference type="HOGENOM" id="CLU_031223_2_1_0"/>
<dbReference type="UniPathway" id="UPA00109">
    <property type="reaction ID" value="UER00187"/>
</dbReference>
<dbReference type="Proteomes" id="UP000000445">
    <property type="component" value="Chromosome"/>
</dbReference>
<dbReference type="GO" id="GO:0009986">
    <property type="term" value="C:cell surface"/>
    <property type="evidence" value="ECO:0007669"/>
    <property type="project" value="UniProtKB-SubCell"/>
</dbReference>
<dbReference type="GO" id="GO:0005576">
    <property type="term" value="C:extracellular region"/>
    <property type="evidence" value="ECO:0007669"/>
    <property type="project" value="UniProtKB-SubCell"/>
</dbReference>
<dbReference type="GO" id="GO:0000015">
    <property type="term" value="C:phosphopyruvate hydratase complex"/>
    <property type="evidence" value="ECO:0007669"/>
    <property type="project" value="InterPro"/>
</dbReference>
<dbReference type="GO" id="GO:0000287">
    <property type="term" value="F:magnesium ion binding"/>
    <property type="evidence" value="ECO:0007669"/>
    <property type="project" value="UniProtKB-UniRule"/>
</dbReference>
<dbReference type="GO" id="GO:0004634">
    <property type="term" value="F:phosphopyruvate hydratase activity"/>
    <property type="evidence" value="ECO:0007669"/>
    <property type="project" value="UniProtKB-UniRule"/>
</dbReference>
<dbReference type="GO" id="GO:0006096">
    <property type="term" value="P:glycolytic process"/>
    <property type="evidence" value="ECO:0007669"/>
    <property type="project" value="UniProtKB-UniRule"/>
</dbReference>
<dbReference type="CDD" id="cd03313">
    <property type="entry name" value="enolase"/>
    <property type="match status" value="1"/>
</dbReference>
<dbReference type="FunFam" id="3.20.20.120:FF:000001">
    <property type="entry name" value="Enolase"/>
    <property type="match status" value="1"/>
</dbReference>
<dbReference type="FunFam" id="3.30.390.10:FF:000001">
    <property type="entry name" value="Enolase"/>
    <property type="match status" value="1"/>
</dbReference>
<dbReference type="Gene3D" id="3.20.20.120">
    <property type="entry name" value="Enolase-like C-terminal domain"/>
    <property type="match status" value="1"/>
</dbReference>
<dbReference type="Gene3D" id="3.30.390.10">
    <property type="entry name" value="Enolase-like, N-terminal domain"/>
    <property type="match status" value="1"/>
</dbReference>
<dbReference type="HAMAP" id="MF_00318">
    <property type="entry name" value="Enolase"/>
    <property type="match status" value="1"/>
</dbReference>
<dbReference type="InterPro" id="IPR000941">
    <property type="entry name" value="Enolase"/>
</dbReference>
<dbReference type="InterPro" id="IPR036849">
    <property type="entry name" value="Enolase-like_C_sf"/>
</dbReference>
<dbReference type="InterPro" id="IPR029017">
    <property type="entry name" value="Enolase-like_N"/>
</dbReference>
<dbReference type="InterPro" id="IPR020810">
    <property type="entry name" value="Enolase_C"/>
</dbReference>
<dbReference type="InterPro" id="IPR020809">
    <property type="entry name" value="Enolase_CS"/>
</dbReference>
<dbReference type="InterPro" id="IPR020811">
    <property type="entry name" value="Enolase_N"/>
</dbReference>
<dbReference type="NCBIfam" id="TIGR01060">
    <property type="entry name" value="eno"/>
    <property type="match status" value="1"/>
</dbReference>
<dbReference type="PANTHER" id="PTHR11902">
    <property type="entry name" value="ENOLASE"/>
    <property type="match status" value="1"/>
</dbReference>
<dbReference type="PANTHER" id="PTHR11902:SF1">
    <property type="entry name" value="ENOLASE"/>
    <property type="match status" value="1"/>
</dbReference>
<dbReference type="Pfam" id="PF00113">
    <property type="entry name" value="Enolase_C"/>
    <property type="match status" value="1"/>
</dbReference>
<dbReference type="Pfam" id="PF03952">
    <property type="entry name" value="Enolase_N"/>
    <property type="match status" value="1"/>
</dbReference>
<dbReference type="PIRSF" id="PIRSF001400">
    <property type="entry name" value="Enolase"/>
    <property type="match status" value="1"/>
</dbReference>
<dbReference type="PRINTS" id="PR00148">
    <property type="entry name" value="ENOLASE"/>
</dbReference>
<dbReference type="SFLD" id="SFLDS00001">
    <property type="entry name" value="Enolase"/>
    <property type="match status" value="1"/>
</dbReference>
<dbReference type="SFLD" id="SFLDF00002">
    <property type="entry name" value="enolase"/>
    <property type="match status" value="1"/>
</dbReference>
<dbReference type="SMART" id="SM01192">
    <property type="entry name" value="Enolase_C"/>
    <property type="match status" value="1"/>
</dbReference>
<dbReference type="SMART" id="SM01193">
    <property type="entry name" value="Enolase_N"/>
    <property type="match status" value="1"/>
</dbReference>
<dbReference type="SUPFAM" id="SSF51604">
    <property type="entry name" value="Enolase C-terminal domain-like"/>
    <property type="match status" value="1"/>
</dbReference>
<dbReference type="SUPFAM" id="SSF54826">
    <property type="entry name" value="Enolase N-terminal domain-like"/>
    <property type="match status" value="1"/>
</dbReference>
<dbReference type="PROSITE" id="PS00164">
    <property type="entry name" value="ENOLASE"/>
    <property type="match status" value="1"/>
</dbReference>
<name>ENO_THENN</name>
<proteinExistence type="inferred from homology"/>
<organism>
    <name type="scientific">Thermotoga neapolitana (strain ATCC 49049 / DSM 4359 / NBRC 107923 / NS-E)</name>
    <dbReference type="NCBI Taxonomy" id="309803"/>
    <lineage>
        <taxon>Bacteria</taxon>
        <taxon>Thermotogati</taxon>
        <taxon>Thermotogota</taxon>
        <taxon>Thermotogae</taxon>
        <taxon>Thermotogales</taxon>
        <taxon>Thermotogaceae</taxon>
        <taxon>Thermotoga</taxon>
    </lineage>
</organism>
<reference key="1">
    <citation type="submission" date="2007-11" db="EMBL/GenBank/DDBJ databases">
        <title>The genome sequence of the hyperthermophilic bacterium Thermotoga neapolitana.</title>
        <authorList>
            <person name="Lim S.K."/>
            <person name="Kim J.S."/>
            <person name="Cha S.H."/>
            <person name="Park B.C."/>
            <person name="Lee D.S."/>
            <person name="Tae H.S."/>
            <person name="Kim S.-J."/>
            <person name="Kim J.J."/>
            <person name="Park K.J."/>
            <person name="Lee S.Y."/>
        </authorList>
    </citation>
    <scope>NUCLEOTIDE SEQUENCE [LARGE SCALE GENOMIC DNA]</scope>
    <source>
        <strain>ATCC 49049 / DSM 4359 / NBRC 107923 / NS-E</strain>
    </source>
</reference>
<keyword id="KW-0963">Cytoplasm</keyword>
<keyword id="KW-0324">Glycolysis</keyword>
<keyword id="KW-0456">Lyase</keyword>
<keyword id="KW-0460">Magnesium</keyword>
<keyword id="KW-0479">Metal-binding</keyword>
<keyword id="KW-0964">Secreted</keyword>
<protein>
    <recommendedName>
        <fullName evidence="1">Enolase</fullName>
        <ecNumber evidence="1">4.2.1.11</ecNumber>
    </recommendedName>
    <alternativeName>
        <fullName evidence="1">2-phospho-D-glycerate hydro-lyase</fullName>
    </alternativeName>
    <alternativeName>
        <fullName evidence="1">2-phosphoglycerate dehydratase</fullName>
    </alternativeName>
</protein>